<feature type="chain" id="PRO_0000202297" description="Uncharacterized protein TP_0665">
    <location>
        <begin position="1"/>
        <end position="251"/>
    </location>
</feature>
<feature type="region of interest" description="Disordered" evidence="1">
    <location>
        <begin position="207"/>
        <end position="251"/>
    </location>
</feature>
<accession>O83671</accession>
<protein>
    <recommendedName>
        <fullName>Uncharacterized protein TP_0665</fullName>
    </recommendedName>
</protein>
<keyword id="KW-1185">Reference proteome</keyword>
<reference key="1">
    <citation type="journal article" date="1998" name="Science">
        <title>Complete genome sequence of Treponema pallidum, the syphilis spirochete.</title>
        <authorList>
            <person name="Fraser C.M."/>
            <person name="Norris S.J."/>
            <person name="Weinstock G.M."/>
            <person name="White O."/>
            <person name="Sutton G.G."/>
            <person name="Dodson R.J."/>
            <person name="Gwinn M.L."/>
            <person name="Hickey E.K."/>
            <person name="Clayton R.A."/>
            <person name="Ketchum K.A."/>
            <person name="Sodergren E."/>
            <person name="Hardham J.M."/>
            <person name="McLeod M.P."/>
            <person name="Salzberg S.L."/>
            <person name="Peterson J.D."/>
            <person name="Khalak H.G."/>
            <person name="Richardson D.L."/>
            <person name="Howell J.K."/>
            <person name="Chidambaram M."/>
            <person name="Utterback T.R."/>
            <person name="McDonald L.A."/>
            <person name="Artiach P."/>
            <person name="Bowman C."/>
            <person name="Cotton M.D."/>
            <person name="Fujii C."/>
            <person name="Garland S.A."/>
            <person name="Hatch B."/>
            <person name="Horst K."/>
            <person name="Roberts K.M."/>
            <person name="Sandusky M."/>
            <person name="Weidman J.F."/>
            <person name="Smith H.O."/>
            <person name="Venter J.C."/>
        </authorList>
    </citation>
    <scope>NUCLEOTIDE SEQUENCE [LARGE SCALE GENOMIC DNA]</scope>
    <source>
        <strain>Nichols</strain>
    </source>
</reference>
<organism>
    <name type="scientific">Treponema pallidum (strain Nichols)</name>
    <dbReference type="NCBI Taxonomy" id="243276"/>
    <lineage>
        <taxon>Bacteria</taxon>
        <taxon>Pseudomonadati</taxon>
        <taxon>Spirochaetota</taxon>
        <taxon>Spirochaetia</taxon>
        <taxon>Spirochaetales</taxon>
        <taxon>Treponemataceae</taxon>
        <taxon>Treponema</taxon>
    </lineage>
</organism>
<dbReference type="EMBL" id="AE000520">
    <property type="protein sequence ID" value="AAC65641.1"/>
    <property type="molecule type" value="Genomic_DNA"/>
</dbReference>
<dbReference type="PIR" id="B71298">
    <property type="entry name" value="B71298"/>
</dbReference>
<dbReference type="RefSeq" id="WP_010882110.1">
    <property type="nucleotide sequence ID" value="NC_021490.2"/>
</dbReference>
<dbReference type="IntAct" id="O83671">
    <property type="interactions" value="1"/>
</dbReference>
<dbReference type="STRING" id="243276.TP_0665"/>
<dbReference type="EnsemblBacteria" id="AAC65641">
    <property type="protein sequence ID" value="AAC65641"/>
    <property type="gene ID" value="TP_0665"/>
</dbReference>
<dbReference type="KEGG" id="tpa:TP_0665"/>
<dbReference type="KEGG" id="tpw:TPANIC_0665"/>
<dbReference type="eggNOG" id="ENOG502ZJ9G">
    <property type="taxonomic scope" value="Bacteria"/>
</dbReference>
<dbReference type="HOGENOM" id="CLU_092314_0_0_12"/>
<dbReference type="OrthoDB" id="358981at2"/>
<dbReference type="Proteomes" id="UP000000811">
    <property type="component" value="Chromosome"/>
</dbReference>
<sequence length="251" mass="28955">MTINTCRETGLHRALKDYFSPRGSRQEVELRGSICDVVHPDGTIVEVQTSGLGRLEAKLKKLLPYHQVMVVYPVSRRLYIRMLNEDGSERHYRKSPKEGSFFQIYREIGRLHDLLDHEHLSLHIVYIHSEVIKVDDRKGRSRYKKPRIVDRKLLEVQSSEEFRNKGSLAQPLLSKLPEIFCCDDLAQTGTGVHCRYALRFLRRNGMATPHSKRGRTKLYRKEPPGDNRSPPPWQEPHGEGLAEKLSPGPAR</sequence>
<proteinExistence type="predicted"/>
<gene>
    <name type="ordered locus">TP_0665</name>
</gene>
<name>Y665_TREPA</name>
<evidence type="ECO:0000256" key="1">
    <source>
        <dbReference type="SAM" id="MobiDB-lite"/>
    </source>
</evidence>